<accession>Q72DN7</accession>
<gene>
    <name evidence="1" type="primary">aroK</name>
    <name type="ordered locus">DVU_0892</name>
</gene>
<evidence type="ECO:0000255" key="1">
    <source>
        <dbReference type="HAMAP-Rule" id="MF_00109"/>
    </source>
</evidence>
<dbReference type="EC" id="2.7.1.71" evidence="1"/>
<dbReference type="EMBL" id="AE017285">
    <property type="protein sequence ID" value="AAS95372.1"/>
    <property type="molecule type" value="Genomic_DNA"/>
</dbReference>
<dbReference type="RefSeq" id="WP_010938191.1">
    <property type="nucleotide sequence ID" value="NC_002937.3"/>
</dbReference>
<dbReference type="RefSeq" id="YP_010113.1">
    <property type="nucleotide sequence ID" value="NC_002937.3"/>
</dbReference>
<dbReference type="SMR" id="Q72DN7"/>
<dbReference type="STRING" id="882.DVU_0892"/>
<dbReference type="PaxDb" id="882-DVU_0892"/>
<dbReference type="EnsemblBacteria" id="AAS95372">
    <property type="protein sequence ID" value="AAS95372"/>
    <property type="gene ID" value="DVU_0892"/>
</dbReference>
<dbReference type="KEGG" id="dvu:DVU_0892"/>
<dbReference type="PATRIC" id="fig|882.5.peg.836"/>
<dbReference type="eggNOG" id="COG0703">
    <property type="taxonomic scope" value="Bacteria"/>
</dbReference>
<dbReference type="HOGENOM" id="CLU_057607_4_3_7"/>
<dbReference type="OrthoDB" id="9800332at2"/>
<dbReference type="PhylomeDB" id="Q72DN7"/>
<dbReference type="UniPathway" id="UPA00053">
    <property type="reaction ID" value="UER00088"/>
</dbReference>
<dbReference type="Proteomes" id="UP000002194">
    <property type="component" value="Chromosome"/>
</dbReference>
<dbReference type="GO" id="GO:0005829">
    <property type="term" value="C:cytosol"/>
    <property type="evidence" value="ECO:0007669"/>
    <property type="project" value="TreeGrafter"/>
</dbReference>
<dbReference type="GO" id="GO:0005524">
    <property type="term" value="F:ATP binding"/>
    <property type="evidence" value="ECO:0007669"/>
    <property type="project" value="UniProtKB-UniRule"/>
</dbReference>
<dbReference type="GO" id="GO:0000287">
    <property type="term" value="F:magnesium ion binding"/>
    <property type="evidence" value="ECO:0007669"/>
    <property type="project" value="UniProtKB-UniRule"/>
</dbReference>
<dbReference type="GO" id="GO:0004765">
    <property type="term" value="F:shikimate kinase activity"/>
    <property type="evidence" value="ECO:0007669"/>
    <property type="project" value="UniProtKB-UniRule"/>
</dbReference>
<dbReference type="GO" id="GO:0008652">
    <property type="term" value="P:amino acid biosynthetic process"/>
    <property type="evidence" value="ECO:0007669"/>
    <property type="project" value="UniProtKB-KW"/>
</dbReference>
<dbReference type="GO" id="GO:0009073">
    <property type="term" value="P:aromatic amino acid family biosynthetic process"/>
    <property type="evidence" value="ECO:0007669"/>
    <property type="project" value="UniProtKB-KW"/>
</dbReference>
<dbReference type="GO" id="GO:0009423">
    <property type="term" value="P:chorismate biosynthetic process"/>
    <property type="evidence" value="ECO:0007669"/>
    <property type="project" value="UniProtKB-UniRule"/>
</dbReference>
<dbReference type="CDD" id="cd00464">
    <property type="entry name" value="SK"/>
    <property type="match status" value="1"/>
</dbReference>
<dbReference type="Gene3D" id="3.40.50.300">
    <property type="entry name" value="P-loop containing nucleotide triphosphate hydrolases"/>
    <property type="match status" value="1"/>
</dbReference>
<dbReference type="HAMAP" id="MF_00109">
    <property type="entry name" value="Shikimate_kinase"/>
    <property type="match status" value="1"/>
</dbReference>
<dbReference type="InterPro" id="IPR027417">
    <property type="entry name" value="P-loop_NTPase"/>
</dbReference>
<dbReference type="InterPro" id="IPR031322">
    <property type="entry name" value="Shikimate/glucono_kinase"/>
</dbReference>
<dbReference type="InterPro" id="IPR000623">
    <property type="entry name" value="Shikimate_kinase/TSH1"/>
</dbReference>
<dbReference type="InterPro" id="IPR023000">
    <property type="entry name" value="Shikimate_kinase_CS"/>
</dbReference>
<dbReference type="NCBIfam" id="NF002988">
    <property type="entry name" value="PRK03731.1"/>
    <property type="match status" value="1"/>
</dbReference>
<dbReference type="PANTHER" id="PTHR21087">
    <property type="entry name" value="SHIKIMATE KINASE"/>
    <property type="match status" value="1"/>
</dbReference>
<dbReference type="PANTHER" id="PTHR21087:SF21">
    <property type="entry name" value="SHIKIMATE KINASE 2"/>
    <property type="match status" value="1"/>
</dbReference>
<dbReference type="Pfam" id="PF01202">
    <property type="entry name" value="SKI"/>
    <property type="match status" value="1"/>
</dbReference>
<dbReference type="PRINTS" id="PR01100">
    <property type="entry name" value="SHIKIMTKNASE"/>
</dbReference>
<dbReference type="SUPFAM" id="SSF52540">
    <property type="entry name" value="P-loop containing nucleoside triphosphate hydrolases"/>
    <property type="match status" value="1"/>
</dbReference>
<dbReference type="PROSITE" id="PS01128">
    <property type="entry name" value="SHIKIMATE_KINASE"/>
    <property type="match status" value="1"/>
</dbReference>
<keyword id="KW-0028">Amino-acid biosynthesis</keyword>
<keyword id="KW-0057">Aromatic amino acid biosynthesis</keyword>
<keyword id="KW-0067">ATP-binding</keyword>
<keyword id="KW-0963">Cytoplasm</keyword>
<keyword id="KW-0418">Kinase</keyword>
<keyword id="KW-0547">Nucleotide-binding</keyword>
<keyword id="KW-1185">Reference proteome</keyword>
<keyword id="KW-0808">Transferase</keyword>
<organism>
    <name type="scientific">Nitratidesulfovibrio vulgaris (strain ATCC 29579 / DSM 644 / CCUG 34227 / NCIMB 8303 / VKM B-1760 / Hildenborough)</name>
    <name type="common">Desulfovibrio vulgaris</name>
    <dbReference type="NCBI Taxonomy" id="882"/>
    <lineage>
        <taxon>Bacteria</taxon>
        <taxon>Pseudomonadati</taxon>
        <taxon>Thermodesulfobacteriota</taxon>
        <taxon>Desulfovibrionia</taxon>
        <taxon>Desulfovibrionales</taxon>
        <taxon>Desulfovibrionaceae</taxon>
        <taxon>Nitratidesulfovibrio</taxon>
    </lineage>
</organism>
<comment type="catalytic activity">
    <reaction evidence="1">
        <text>shikimate + ATP = 3-phosphoshikimate + ADP + H(+)</text>
        <dbReference type="Rhea" id="RHEA:13121"/>
        <dbReference type="ChEBI" id="CHEBI:15378"/>
        <dbReference type="ChEBI" id="CHEBI:30616"/>
        <dbReference type="ChEBI" id="CHEBI:36208"/>
        <dbReference type="ChEBI" id="CHEBI:145989"/>
        <dbReference type="ChEBI" id="CHEBI:456216"/>
        <dbReference type="EC" id="2.7.1.71"/>
    </reaction>
</comment>
<comment type="pathway">
    <text evidence="1">Metabolic intermediate biosynthesis; chorismate biosynthesis; chorismate from D-erythrose 4-phosphate and phosphoenolpyruvate: step 5/7.</text>
</comment>
<comment type="subcellular location">
    <subcellularLocation>
        <location evidence="1">Cytoplasm</location>
    </subcellularLocation>
</comment>
<comment type="similarity">
    <text evidence="1">Belongs to the shikimate kinase family.</text>
</comment>
<proteinExistence type="inferred from homology"/>
<reference key="1">
    <citation type="journal article" date="2004" name="Nat. Biotechnol.">
        <title>The genome sequence of the anaerobic, sulfate-reducing bacterium Desulfovibrio vulgaris Hildenborough.</title>
        <authorList>
            <person name="Heidelberg J.F."/>
            <person name="Seshadri R."/>
            <person name="Haveman S.A."/>
            <person name="Hemme C.L."/>
            <person name="Paulsen I.T."/>
            <person name="Kolonay J.F."/>
            <person name="Eisen J.A."/>
            <person name="Ward N.L."/>
            <person name="Methe B.A."/>
            <person name="Brinkac L.M."/>
            <person name="Daugherty S.C."/>
            <person name="DeBoy R.T."/>
            <person name="Dodson R.J."/>
            <person name="Durkin A.S."/>
            <person name="Madupu R."/>
            <person name="Nelson W.C."/>
            <person name="Sullivan S.A."/>
            <person name="Fouts D.E."/>
            <person name="Haft D.H."/>
            <person name="Selengut J."/>
            <person name="Peterson J.D."/>
            <person name="Davidsen T.M."/>
            <person name="Zafar N."/>
            <person name="Zhou L."/>
            <person name="Radune D."/>
            <person name="Dimitrov G."/>
            <person name="Hance M."/>
            <person name="Tran K."/>
            <person name="Khouri H.M."/>
            <person name="Gill J."/>
            <person name="Utterback T.R."/>
            <person name="Feldblyum T.V."/>
            <person name="Wall J.D."/>
            <person name="Voordouw G."/>
            <person name="Fraser C.M."/>
        </authorList>
    </citation>
    <scope>NUCLEOTIDE SEQUENCE [LARGE SCALE GENOMIC DNA]</scope>
    <source>
        <strain>ATCC 29579 / DSM 644 / CCUG 34227 / NCIMB 8303 / VKM B-1760 / Hildenborough</strain>
    </source>
</reference>
<sequence length="175" mass="18618">MGSEVCRVFLIGGRASGKSTVGRALAARLGWDFADTDAMVTRRAGCDIATLVAERGWDAFRDMESDALRDAAARERVVVATGGGMVLRAENRALLREAGVTVFLSLPVEVVAARLARNPEHGQRPSLTGKAVADEVADVMRERAPLYAEAARHVVRGDAPVACIVEDITALLAFS</sequence>
<protein>
    <recommendedName>
        <fullName evidence="1">Shikimate kinase</fullName>
        <shortName evidence="1">SK</shortName>
        <ecNumber evidence="1">2.7.1.71</ecNumber>
    </recommendedName>
</protein>
<feature type="chain" id="PRO_0000237875" description="Shikimate kinase">
    <location>
        <begin position="1"/>
        <end position="175"/>
    </location>
</feature>
<feature type="binding site" evidence="1">
    <location>
        <begin position="12"/>
        <end position="19"/>
    </location>
    <ligand>
        <name>ATP</name>
        <dbReference type="ChEBI" id="CHEBI:30616"/>
    </ligand>
</feature>
<name>AROK_NITV2</name>